<dbReference type="EMBL" id="X59480">
    <property type="protein sequence ID" value="CAA42081.1"/>
    <property type="molecule type" value="Genomic_DNA"/>
</dbReference>
<dbReference type="EMBL" id="BA000016">
    <property type="protein sequence ID" value="BAB81867.1"/>
    <property type="molecule type" value="Genomic_DNA"/>
</dbReference>
<dbReference type="PIR" id="A54537">
    <property type="entry name" value="A54537"/>
</dbReference>
<dbReference type="RefSeq" id="WP_003452440.1">
    <property type="nucleotide sequence ID" value="NC_003366.1"/>
</dbReference>
<dbReference type="SMR" id="P41371"/>
<dbReference type="STRING" id="195102.gene:10491431"/>
<dbReference type="KEGG" id="cpe:CPE2161"/>
<dbReference type="HOGENOM" id="CLU_169738_2_2_9"/>
<dbReference type="Proteomes" id="UP000000818">
    <property type="component" value="Chromosome"/>
</dbReference>
<dbReference type="GO" id="GO:0003690">
    <property type="term" value="F:double-stranded DNA binding"/>
    <property type="evidence" value="ECO:0007669"/>
    <property type="project" value="InterPro"/>
</dbReference>
<dbReference type="GO" id="GO:0006265">
    <property type="term" value="P:DNA topological change"/>
    <property type="evidence" value="ECO:0007669"/>
    <property type="project" value="InterPro"/>
</dbReference>
<dbReference type="GO" id="GO:0030435">
    <property type="term" value="P:sporulation resulting in formation of a cellular spore"/>
    <property type="evidence" value="ECO:0007669"/>
    <property type="project" value="UniProtKB-KW"/>
</dbReference>
<dbReference type="Gene3D" id="6.10.10.80">
    <property type="entry name" value="Small, acid-soluble spore protein, alpha/beta type-like"/>
    <property type="match status" value="1"/>
</dbReference>
<dbReference type="InterPro" id="IPR001448">
    <property type="entry name" value="SASP_alpha/beta-type"/>
</dbReference>
<dbReference type="InterPro" id="IPR018126">
    <property type="entry name" value="SASP_alpha/beta-type_CS"/>
</dbReference>
<dbReference type="InterPro" id="IPR050847">
    <property type="entry name" value="SASP_DNA-binding"/>
</dbReference>
<dbReference type="InterPro" id="IPR038300">
    <property type="entry name" value="SASP_sf_alpha/beta"/>
</dbReference>
<dbReference type="PANTHER" id="PTHR36107">
    <property type="entry name" value="SMALL, ACID-SOLUBLE SPORE PROTEIN A"/>
    <property type="match status" value="1"/>
</dbReference>
<dbReference type="PANTHER" id="PTHR36107:SF1">
    <property type="entry name" value="SMALL, ACID-SOLUBLE SPORE PROTEIN A"/>
    <property type="match status" value="1"/>
</dbReference>
<dbReference type="Pfam" id="PF00269">
    <property type="entry name" value="SASP"/>
    <property type="match status" value="1"/>
</dbReference>
<dbReference type="PROSITE" id="PS00304">
    <property type="entry name" value="SASP_1"/>
    <property type="match status" value="1"/>
</dbReference>
<dbReference type="PROSITE" id="PS00684">
    <property type="entry name" value="SASP_2"/>
    <property type="match status" value="1"/>
</dbReference>
<proteinExistence type="inferred from homology"/>
<comment type="function">
    <text>SASP are bound to spore DNA. They are double-stranded DNA-binding proteins that cause DNA to change to an a-like conformation. They protect the DNA backbone from chemical and enzymatic cleavage and are thus involved in dormant spore's high resistance to UV light.</text>
</comment>
<comment type="PTM">
    <text>SASP are degraded in the first minutes of spore germination and provide amino acids for both new protein synthesis and metabolism.</text>
</comment>
<comment type="similarity">
    <text evidence="2">Belongs to the alpha/beta-type SASP family.</text>
</comment>
<evidence type="ECO:0000250" key="1"/>
<evidence type="ECO:0000305" key="2"/>
<organism>
    <name type="scientific">Clostridium perfringens (strain 13 / Type A)</name>
    <dbReference type="NCBI Taxonomy" id="195102"/>
    <lineage>
        <taxon>Bacteria</taxon>
        <taxon>Bacillati</taxon>
        <taxon>Bacillota</taxon>
        <taxon>Clostridia</taxon>
        <taxon>Eubacteriales</taxon>
        <taxon>Clostridiaceae</taxon>
        <taxon>Clostridium</taxon>
    </lineage>
</organism>
<sequence length="60" mass="6583">MSKSLVPEAKNGLSKFKNEVARELGVPFSDYNGDLSSRQCGSVGGEMVKRMVEAYESQIK</sequence>
<accession>P41371</accession>
<gene>
    <name type="primary">ssp1</name>
    <name type="ordered locus">CPE2161</name>
</gene>
<protein>
    <recommendedName>
        <fullName>Small, acid-soluble spore protein 1</fullName>
        <shortName>SSP-1</shortName>
    </recommendedName>
</protein>
<reference key="1">
    <citation type="journal article" date="1991" name="FEMS Microbiol. Lett.">
        <title>Cloning and nucleotide sequence of three genes coding for small, acid-soluble proteins of Clostridium perfringens spores.</title>
        <authorList>
            <person name="Cabrera-Martinez R.M."/>
            <person name="Setlow P."/>
        </authorList>
    </citation>
    <scope>NUCLEOTIDE SEQUENCE [GENOMIC DNA]</scope>
</reference>
<reference key="2">
    <citation type="journal article" date="2002" name="Proc. Natl. Acad. Sci. U.S.A.">
        <title>Complete genome sequence of Clostridium perfringens, an anaerobic flesh-eater.</title>
        <authorList>
            <person name="Shimizu T."/>
            <person name="Ohtani K."/>
            <person name="Hirakawa H."/>
            <person name="Ohshima K."/>
            <person name="Yamashita A."/>
            <person name="Shiba T."/>
            <person name="Ogasawara N."/>
            <person name="Hattori M."/>
            <person name="Kuhara S."/>
            <person name="Hayashi H."/>
        </authorList>
    </citation>
    <scope>NUCLEOTIDE SEQUENCE [LARGE SCALE GENOMIC DNA]</scope>
    <source>
        <strain>13 / Type A</strain>
    </source>
</reference>
<feature type="initiator methionine" description="Removed" evidence="1">
    <location>
        <position position="1"/>
    </location>
</feature>
<feature type="chain" id="PRO_0000196306" description="Small, acid-soluble spore protein 1">
    <location>
        <begin position="2"/>
        <end position="60"/>
    </location>
</feature>
<feature type="site" description="Cleavage; by spore protease">
    <location>
        <begin position="19"/>
        <end position="20"/>
    </location>
</feature>
<keyword id="KW-0238">DNA-binding</keyword>
<keyword id="KW-1185">Reference proteome</keyword>
<keyword id="KW-0749">Sporulation</keyword>
<name>SAS0_CLOPE</name>